<comment type="catalytic activity">
    <reaction>
        <text>D-glucose + NAD(+) = D-glucono-1,5-lactone + NADH + H(+)</text>
        <dbReference type="Rhea" id="RHEA:14293"/>
        <dbReference type="ChEBI" id="CHEBI:4167"/>
        <dbReference type="ChEBI" id="CHEBI:15378"/>
        <dbReference type="ChEBI" id="CHEBI:16217"/>
        <dbReference type="ChEBI" id="CHEBI:57540"/>
        <dbReference type="ChEBI" id="CHEBI:57945"/>
        <dbReference type="EC" id="1.1.1.47"/>
    </reaction>
</comment>
<comment type="catalytic activity">
    <reaction>
        <text>D-glucose + NADP(+) = D-glucono-1,5-lactone + NADPH + H(+)</text>
        <dbReference type="Rhea" id="RHEA:14405"/>
        <dbReference type="ChEBI" id="CHEBI:4167"/>
        <dbReference type="ChEBI" id="CHEBI:15378"/>
        <dbReference type="ChEBI" id="CHEBI:16217"/>
        <dbReference type="ChEBI" id="CHEBI:57783"/>
        <dbReference type="ChEBI" id="CHEBI:58349"/>
        <dbReference type="EC" id="1.1.1.47"/>
    </reaction>
</comment>
<comment type="subunit">
    <text>Homotetramer.</text>
</comment>
<comment type="similarity">
    <text evidence="3">Belongs to the short-chain dehydrogenases/reductases (SDR) family.</text>
</comment>
<gene>
    <name type="primary">gdhA</name>
</gene>
<accession>P10528</accession>
<name>DHGA_PRIMG</name>
<dbReference type="EC" id="1.1.1.47"/>
<dbReference type="EMBL" id="X12370">
    <property type="protein sequence ID" value="CAA30931.1"/>
    <property type="molecule type" value="Genomic_DNA"/>
</dbReference>
<dbReference type="PIR" id="S00812">
    <property type="entry name" value="S00812"/>
</dbReference>
<dbReference type="SMR" id="P10528"/>
<dbReference type="GO" id="GO:0047934">
    <property type="term" value="F:glucose 1-dehydrogenase (NAD+) activity"/>
    <property type="evidence" value="ECO:0007669"/>
    <property type="project" value="RHEA"/>
</dbReference>
<dbReference type="GO" id="GO:0047935">
    <property type="term" value="F:glucose 1-dehydrogenase (NADP+) activity"/>
    <property type="evidence" value="ECO:0007669"/>
    <property type="project" value="RHEA"/>
</dbReference>
<dbReference type="CDD" id="cd05358">
    <property type="entry name" value="GlcDH_SDR_c"/>
    <property type="match status" value="1"/>
</dbReference>
<dbReference type="FunFam" id="3.40.50.720:FF:000248">
    <property type="entry name" value="Glucose 1-dehydrogenase"/>
    <property type="match status" value="1"/>
</dbReference>
<dbReference type="Gene3D" id="3.40.50.720">
    <property type="entry name" value="NAD(P)-binding Rossmann-like Domain"/>
    <property type="match status" value="1"/>
</dbReference>
<dbReference type="InterPro" id="IPR036291">
    <property type="entry name" value="NAD(P)-bd_dom_sf"/>
</dbReference>
<dbReference type="InterPro" id="IPR020904">
    <property type="entry name" value="Sc_DH/Rdtase_CS"/>
</dbReference>
<dbReference type="InterPro" id="IPR002347">
    <property type="entry name" value="SDR_fam"/>
</dbReference>
<dbReference type="NCBIfam" id="NF005559">
    <property type="entry name" value="PRK07231.1"/>
    <property type="match status" value="1"/>
</dbReference>
<dbReference type="NCBIfam" id="NF006493">
    <property type="entry name" value="PRK08936.1"/>
    <property type="match status" value="1"/>
</dbReference>
<dbReference type="PANTHER" id="PTHR43639">
    <property type="entry name" value="OXIDOREDUCTASE, SHORT-CHAIN DEHYDROGENASE/REDUCTASE FAMILY (AFU_ORTHOLOGUE AFUA_5G02870)"/>
    <property type="match status" value="1"/>
</dbReference>
<dbReference type="PANTHER" id="PTHR43639:SF1">
    <property type="entry name" value="SHORT-CHAIN DEHYDROGENASE_REDUCTASE FAMILY PROTEIN"/>
    <property type="match status" value="1"/>
</dbReference>
<dbReference type="Pfam" id="PF13561">
    <property type="entry name" value="adh_short_C2"/>
    <property type="match status" value="1"/>
</dbReference>
<dbReference type="PRINTS" id="PR00081">
    <property type="entry name" value="GDHRDH"/>
</dbReference>
<dbReference type="PRINTS" id="PR00080">
    <property type="entry name" value="SDRFAMILY"/>
</dbReference>
<dbReference type="SUPFAM" id="SSF51735">
    <property type="entry name" value="NAD(P)-binding Rossmann-fold domains"/>
    <property type="match status" value="1"/>
</dbReference>
<dbReference type="PROSITE" id="PS00061">
    <property type="entry name" value="ADH_SHORT"/>
    <property type="match status" value="1"/>
</dbReference>
<reference key="1">
    <citation type="journal article" date="1988" name="Eur. J. Biochem.">
        <title>Identification and isolation of glucose dehydrogenase genes of Bacillus megaterium M1286 and their expression in Escherichia coli.</title>
        <authorList>
            <person name="Heilmann H.J."/>
            <person name="Maegert H.-J."/>
            <person name="Gassen H.G."/>
        </authorList>
    </citation>
    <scope>NUCLEOTIDE SEQUENCE [GENOMIC DNA]</scope>
    <source>
        <strain>M1286</strain>
    </source>
</reference>
<protein>
    <recommendedName>
        <fullName>Glucose 1-dehydrogenase A</fullName>
        <ecNumber>1.1.1.47</ecNumber>
    </recommendedName>
</protein>
<sequence length="261" mass="28187">MYTDLKDKVVVITGGSTGLGRAMAVRFGQEEAKVVINYYNNEEEALDAKKEVEEAGGQAIIVQGDVTKEEDVVNLVQTAIKEFGTLDVMINNAGVENPVPSHELSLDNWNKVIDTNLTGAFLGSREAIKYFVENDIKGNVINMSSVHEMIPWPLFVHYAASKGGMKLMTETLALEYAPKGIRVNNIGPGAMNTPINAEKFADPEQRADVESMIPMGYIGKPEEVAAVAAFLASSQASYVTGITLFADGGMTKYPSFQAGRG</sequence>
<evidence type="ECO:0000250" key="1"/>
<evidence type="ECO:0000255" key="2">
    <source>
        <dbReference type="PROSITE-ProRule" id="PRU10001"/>
    </source>
</evidence>
<evidence type="ECO:0000305" key="3"/>
<proteinExistence type="inferred from homology"/>
<organism>
    <name type="scientific">Priestia megaterium</name>
    <name type="common">Bacillus megaterium</name>
    <dbReference type="NCBI Taxonomy" id="1404"/>
    <lineage>
        <taxon>Bacteria</taxon>
        <taxon>Bacillati</taxon>
        <taxon>Bacillota</taxon>
        <taxon>Bacilli</taxon>
        <taxon>Bacillales</taxon>
        <taxon>Bacillaceae</taxon>
        <taxon>Priestia</taxon>
    </lineage>
</organism>
<feature type="chain" id="PRO_0000054613" description="Glucose 1-dehydrogenase A">
    <location>
        <begin position="1"/>
        <end position="261"/>
    </location>
</feature>
<feature type="active site" description="Proton acceptor" evidence="2">
    <location>
        <position position="158"/>
    </location>
</feature>
<feature type="binding site" evidence="1">
    <location>
        <begin position="11"/>
        <end position="35"/>
    </location>
    <ligand>
        <name>NADP(+)</name>
        <dbReference type="ChEBI" id="CHEBI:58349"/>
    </ligand>
</feature>
<feature type="binding site" evidence="1">
    <location>
        <position position="145"/>
    </location>
    <ligand>
        <name>substrate</name>
    </ligand>
</feature>
<keyword id="KW-0521">NADP</keyword>
<keyword id="KW-0560">Oxidoreductase</keyword>